<protein>
    <recommendedName>
        <fullName evidence="4">Pandinin-2</fullName>
        <shortName>Pin2</shortName>
    </recommendedName>
    <alternativeName>
        <fullName evidence="6">Non-disulfide-bridged peptide 3.1</fullName>
        <shortName evidence="6">NDBP-3.1</shortName>
    </alternativeName>
    <alternativeName>
        <fullName evidence="5">Non-disulfide-bridged peptide 4.1</fullName>
        <shortName evidence="5">NDBP-4.1</shortName>
    </alternativeName>
</protein>
<name>NDB31_PANIM</name>
<accession>P83240</accession>
<keyword id="KW-0044">Antibiotic</keyword>
<keyword id="KW-0929">Antimicrobial</keyword>
<keyword id="KW-0204">Cytolysis</keyword>
<keyword id="KW-0903">Direct protein sequencing</keyword>
<keyword id="KW-0295">Fungicide</keyword>
<keyword id="KW-0354">Hemolysis</keyword>
<keyword id="KW-0406">Ion transport</keyword>
<keyword id="KW-0472">Membrane</keyword>
<keyword id="KW-0964">Secreted</keyword>
<keyword id="KW-1052">Target cell membrane</keyword>
<keyword id="KW-1053">Target membrane</keyword>
<keyword id="KW-0812">Transmembrane</keyword>
<keyword id="KW-0813">Transport</keyword>
<reference key="1">
    <citation type="journal article" date="2001" name="Biochem. J.">
        <title>Characterization of unique amphipathic antimicrobial peptides from venom of the scorpion Pandinus imperator.</title>
        <authorList>
            <person name="Corzo G."/>
            <person name="Escoubas P."/>
            <person name="Villegas E."/>
            <person name="Barnham K.J."/>
            <person name="He W."/>
            <person name="Norton R.S."/>
            <person name="Nakajima T."/>
        </authorList>
    </citation>
    <scope>PROTEIN SEQUENCE</scope>
    <scope>FUNCTION</scope>
    <scope>SUBCELLULAR LOCATION</scope>
    <scope>MASS SPECTROMETRY</scope>
    <scope>STRUCTURE BY NMR</scope>
    <source>
        <tissue>Venom</tissue>
    </source>
</reference>
<reference key="2">
    <citation type="journal article" date="2004" name="Biochim. Biophys. Acta">
        <title>Pore formation of phospholipid membranes by the action of two hemolytic arachnid peptides of different size.</title>
        <authorList>
            <person name="Belokoneva O.S."/>
            <person name="Satake H."/>
            <person name="Mal'tseva E.L."/>
            <person name="Pal'mina N.P."/>
            <person name="Villegas E."/>
            <person name="Nakajima T."/>
            <person name="Corzo G."/>
        </authorList>
    </citation>
    <scope>FUNCTION</scope>
    <scope>SUBCELLULAR LOCATION</scope>
</reference>
<reference key="3">
    <citation type="journal article" date="2013" name="J. Antibiot.">
        <title>Antimicrobial peptides from arachnid venoms and their microbicidal activity in the presence of commercial antibiotics.</title>
        <authorList>
            <person name="Garcia F."/>
            <person name="Villegas E."/>
            <person name="Espino-Solis G.P."/>
            <person name="Rodriguez A."/>
            <person name="Paniagua-Solis J.F."/>
            <person name="Sandoval-Lopez G."/>
            <person name="Possani L.D."/>
            <person name="Corzo G."/>
        </authorList>
    </citation>
    <scope>FUNCTION ON E.COLI S.AUREUS AND HUMAN ERYTHROCYTES</scope>
    <source>
        <tissue>Venom</tissue>
    </source>
</reference>
<reference key="4">
    <citation type="journal article" date="2005" name="IUBMB Life">
        <title>Scorpion venom peptides without disulfide bridges.</title>
        <authorList>
            <person name="Zeng X.C."/>
            <person name="Corzo G."/>
            <person name="Hahin R."/>
        </authorList>
    </citation>
    <scope>NOMENCLATURE</scope>
</reference>
<reference key="5">
    <citation type="journal article" date="2014" name="Peptides">
        <title>Scorpion venom peptides with no disulfide bridges: a review.</title>
        <authorList>
            <person name="Almaaytah A."/>
            <person name="Albalas Q."/>
        </authorList>
    </citation>
    <scope>NOMENCLATURE</scope>
</reference>
<reference key="6">
    <citation type="journal article" date="2004" name="Biophys. J.">
        <title>Orientation and pore-forming mechanism of a scorpion pore-forming peptide bound to magnetically oriented lipid bilayers.</title>
        <authorList>
            <person name="Nomura K."/>
            <person name="Corzo G."/>
            <person name="Nakajima T."/>
            <person name="Iwashita T."/>
        </authorList>
    </citation>
    <scope>STRUCTURE BY NMR</scope>
    <scope>PORE FORMATION MECHANISM MODEL</scope>
</reference>
<organism>
    <name type="scientific">Pandinus imperator</name>
    <name type="common">Emperor scorpion</name>
    <dbReference type="NCBI Taxonomy" id="55084"/>
    <lineage>
        <taxon>Eukaryota</taxon>
        <taxon>Metazoa</taxon>
        <taxon>Ecdysozoa</taxon>
        <taxon>Arthropoda</taxon>
        <taxon>Chelicerata</taxon>
        <taxon>Arachnida</taxon>
        <taxon>Scorpiones</taxon>
        <taxon>Iurida</taxon>
        <taxon>Scorpionoidea</taxon>
        <taxon>Scorpionidae</taxon>
        <taxon>Pandininae</taxon>
        <taxon>Pandinus</taxon>
    </lineage>
</organism>
<evidence type="ECO:0000269" key="1">
    <source>
    </source>
</evidence>
<evidence type="ECO:0000269" key="2">
    <source>
    </source>
</evidence>
<evidence type="ECO:0000269" key="3">
    <source>
    </source>
</evidence>
<evidence type="ECO:0000303" key="4">
    <source>
    </source>
</evidence>
<evidence type="ECO:0000303" key="5">
    <source>
    </source>
</evidence>
<evidence type="ECO:0000303" key="6">
    <source>
    </source>
</evidence>
<evidence type="ECO:0000305" key="7"/>
<proteinExistence type="evidence at protein level"/>
<dbReference type="TCDB" id="1.C.124.1.1">
    <property type="family name" value="the antimicrobial pore-forming pandinin (pin) family"/>
</dbReference>
<dbReference type="GO" id="GO:0005576">
    <property type="term" value="C:extracellular region"/>
    <property type="evidence" value="ECO:0007669"/>
    <property type="project" value="UniProtKB-SubCell"/>
</dbReference>
<dbReference type="GO" id="GO:0016020">
    <property type="term" value="C:membrane"/>
    <property type="evidence" value="ECO:0007669"/>
    <property type="project" value="UniProtKB-KW"/>
</dbReference>
<dbReference type="GO" id="GO:0044218">
    <property type="term" value="C:other organism cell membrane"/>
    <property type="evidence" value="ECO:0007669"/>
    <property type="project" value="UniProtKB-KW"/>
</dbReference>
<dbReference type="GO" id="GO:0042742">
    <property type="term" value="P:defense response to bacterium"/>
    <property type="evidence" value="ECO:0007669"/>
    <property type="project" value="UniProtKB-KW"/>
</dbReference>
<dbReference type="GO" id="GO:0050832">
    <property type="term" value="P:defense response to fungus"/>
    <property type="evidence" value="ECO:0007669"/>
    <property type="project" value="UniProtKB-KW"/>
</dbReference>
<dbReference type="GO" id="GO:0031640">
    <property type="term" value="P:killing of cells of another organism"/>
    <property type="evidence" value="ECO:0007669"/>
    <property type="project" value="UniProtKB-KW"/>
</dbReference>
<dbReference type="GO" id="GO:0006811">
    <property type="term" value="P:monoatomic ion transport"/>
    <property type="evidence" value="ECO:0007669"/>
    <property type="project" value="UniProtKB-KW"/>
</dbReference>
<dbReference type="InterPro" id="IPR012523">
    <property type="entry name" value="Antimicrobial_4"/>
</dbReference>
<dbReference type="Pfam" id="PF08024">
    <property type="entry name" value="Antimicrobial_4"/>
    <property type="match status" value="1"/>
</dbReference>
<sequence length="24" mass="2612">FWGALAKGALKLIPSLFSSFSKKD</sequence>
<feature type="peptide" id="PRO_0000043483" description="Pandinin-2">
    <location>
        <begin position="1"/>
        <end position="24"/>
    </location>
</feature>
<comment type="function">
    <text evidence="1 2 3">Disrupts cell membranes through formation of pores. Has strong antimicrobial activity against Gram-positive bacteria B.subtilis, S.epidermidis, E.faecalis and S.aureus. Is less active against Gram-negative bacteria P.aeruginosa and E.coli. Also increases efficacy of antibiotics (ampicillin, chloramphenicol, streptomycin, kanamycin, novobiocin) when tested against E.coli, probably by facilitating their incorporation into the bacteria. Possesses antifungal activity against C.albicans and hemolytic activity against human, sheep and pig erythrocytes.</text>
</comment>
<comment type="subunit">
    <text evidence="7">Homooligomer.</text>
</comment>
<comment type="subcellular location">
    <subcellularLocation>
        <location evidence="1">Secreted</location>
    </subcellularLocation>
    <subcellularLocation>
        <location evidence="2">Target cell membrane</location>
    </subcellularLocation>
    <text evidence="2">Forms a helical channel in target membrane.</text>
</comment>
<comment type="tissue specificity">
    <text evidence="7">Expressed by the venom gland.</text>
</comment>
<comment type="mass spectrometry" mass="2612.6" method="MALDI" evidence="1"/>
<comment type="similarity">
    <text evidence="7">Belongs to the non-disulfide-bridged peptide (NDBP) superfamily. Medium-length antimicrobial peptide (group 3) family.</text>
</comment>